<feature type="signal peptide" evidence="4">
    <location>
        <begin position="1"/>
        <end position="16"/>
    </location>
</feature>
<feature type="chain" id="PRO_0000419219" description="Acidic phospholipase A2 DsM-a2/DsM-a2'">
    <location>
        <begin position="17"/>
        <end position="138"/>
    </location>
</feature>
<feature type="active site" evidence="1">
    <location>
        <position position="63"/>
    </location>
</feature>
<feature type="active site" evidence="1">
    <location>
        <position position="105"/>
    </location>
</feature>
<feature type="binding site" evidence="1">
    <location>
        <position position="43"/>
    </location>
    <ligand>
        <name>Ca(2+)</name>
        <dbReference type="ChEBI" id="CHEBI:29108"/>
    </ligand>
</feature>
<feature type="binding site" evidence="1">
    <location>
        <position position="45"/>
    </location>
    <ligand>
        <name>Ca(2+)</name>
        <dbReference type="ChEBI" id="CHEBI:29108"/>
    </ligand>
</feature>
<feature type="binding site" evidence="1">
    <location>
        <position position="47"/>
    </location>
    <ligand>
        <name>Ca(2+)</name>
        <dbReference type="ChEBI" id="CHEBI:29108"/>
    </ligand>
</feature>
<feature type="binding site" evidence="1">
    <location>
        <position position="64"/>
    </location>
    <ligand>
        <name>Ca(2+)</name>
        <dbReference type="ChEBI" id="CHEBI:29108"/>
    </ligand>
</feature>
<feature type="disulfide bond" evidence="1">
    <location>
        <begin position="42"/>
        <end position="131"/>
    </location>
</feature>
<feature type="disulfide bond" evidence="1">
    <location>
        <begin position="44"/>
        <end position="60"/>
    </location>
</feature>
<feature type="disulfide bond" evidence="1">
    <location>
        <begin position="59"/>
        <end position="111"/>
    </location>
</feature>
<feature type="disulfide bond" evidence="1">
    <location>
        <begin position="65"/>
        <end position="138"/>
    </location>
</feature>
<feature type="disulfide bond" evidence="1">
    <location>
        <begin position="66"/>
        <end position="104"/>
    </location>
</feature>
<feature type="disulfide bond" evidence="1">
    <location>
        <begin position="73"/>
        <end position="97"/>
    </location>
</feature>
<feature type="disulfide bond" evidence="1">
    <location>
        <begin position="91"/>
        <end position="102"/>
    </location>
</feature>
<sequence length="138" mass="15586">MRTLWIVAVCLIGVEGNLYQFGEMINQKTGNFGLLSYVYYGCYCGWGGKGKPQDATDRCCFVHDCCYGRVKGCDPKTATYSYSFENGDIVCGGDDPCLRAVCECDRVAAICFRENMNTYDKKYMLYSIFDCKEESDQC</sequence>
<proteinExistence type="evidence at protein level"/>
<dbReference type="EC" id="3.1.1.4"/>
<dbReference type="EMBL" id="DQ090654">
    <property type="protein sequence ID" value="AAZ53176.1"/>
    <property type="molecule type" value="mRNA"/>
</dbReference>
<dbReference type="SMR" id="A8CG78"/>
<dbReference type="GO" id="GO:0005576">
    <property type="term" value="C:extracellular region"/>
    <property type="evidence" value="ECO:0007669"/>
    <property type="project" value="UniProtKB-SubCell"/>
</dbReference>
<dbReference type="GO" id="GO:0005509">
    <property type="term" value="F:calcium ion binding"/>
    <property type="evidence" value="ECO:0007669"/>
    <property type="project" value="InterPro"/>
</dbReference>
<dbReference type="GO" id="GO:0047498">
    <property type="term" value="F:calcium-dependent phospholipase A2 activity"/>
    <property type="evidence" value="ECO:0007669"/>
    <property type="project" value="TreeGrafter"/>
</dbReference>
<dbReference type="GO" id="GO:0005543">
    <property type="term" value="F:phospholipid binding"/>
    <property type="evidence" value="ECO:0007669"/>
    <property type="project" value="TreeGrafter"/>
</dbReference>
<dbReference type="GO" id="GO:0090729">
    <property type="term" value="F:toxin activity"/>
    <property type="evidence" value="ECO:0007669"/>
    <property type="project" value="UniProtKB-KW"/>
</dbReference>
<dbReference type="GO" id="GO:0050482">
    <property type="term" value="P:arachidonate secretion"/>
    <property type="evidence" value="ECO:0007669"/>
    <property type="project" value="InterPro"/>
</dbReference>
<dbReference type="GO" id="GO:0016042">
    <property type="term" value="P:lipid catabolic process"/>
    <property type="evidence" value="ECO:0007669"/>
    <property type="project" value="UniProtKB-KW"/>
</dbReference>
<dbReference type="GO" id="GO:0042130">
    <property type="term" value="P:negative regulation of T cell proliferation"/>
    <property type="evidence" value="ECO:0007669"/>
    <property type="project" value="TreeGrafter"/>
</dbReference>
<dbReference type="GO" id="GO:0006644">
    <property type="term" value="P:phospholipid metabolic process"/>
    <property type="evidence" value="ECO:0007669"/>
    <property type="project" value="InterPro"/>
</dbReference>
<dbReference type="CDD" id="cd00125">
    <property type="entry name" value="PLA2c"/>
    <property type="match status" value="1"/>
</dbReference>
<dbReference type="FunFam" id="1.20.90.10:FF:000001">
    <property type="entry name" value="Basic phospholipase A2 homolog"/>
    <property type="match status" value="1"/>
</dbReference>
<dbReference type="Gene3D" id="1.20.90.10">
    <property type="entry name" value="Phospholipase A2 domain"/>
    <property type="match status" value="1"/>
</dbReference>
<dbReference type="InterPro" id="IPR001211">
    <property type="entry name" value="PLipase_A2"/>
</dbReference>
<dbReference type="InterPro" id="IPR033112">
    <property type="entry name" value="PLipase_A2_Asp_AS"/>
</dbReference>
<dbReference type="InterPro" id="IPR016090">
    <property type="entry name" value="PLipase_A2_dom"/>
</dbReference>
<dbReference type="InterPro" id="IPR036444">
    <property type="entry name" value="PLipase_A2_dom_sf"/>
</dbReference>
<dbReference type="InterPro" id="IPR033113">
    <property type="entry name" value="PLipase_A2_His_AS"/>
</dbReference>
<dbReference type="PANTHER" id="PTHR11716">
    <property type="entry name" value="PHOSPHOLIPASE A2 FAMILY MEMBER"/>
    <property type="match status" value="1"/>
</dbReference>
<dbReference type="PANTHER" id="PTHR11716:SF9">
    <property type="entry name" value="PHOSPHOLIPASE A2, MEMBRANE ASSOCIATED"/>
    <property type="match status" value="1"/>
</dbReference>
<dbReference type="Pfam" id="PF00068">
    <property type="entry name" value="Phospholip_A2_1"/>
    <property type="match status" value="1"/>
</dbReference>
<dbReference type="PRINTS" id="PR00389">
    <property type="entry name" value="PHPHLIPASEA2"/>
</dbReference>
<dbReference type="SMART" id="SM00085">
    <property type="entry name" value="PA2c"/>
    <property type="match status" value="1"/>
</dbReference>
<dbReference type="SUPFAM" id="SSF48619">
    <property type="entry name" value="Phospholipase A2, PLA2"/>
    <property type="match status" value="1"/>
</dbReference>
<dbReference type="PROSITE" id="PS00119">
    <property type="entry name" value="PA2_ASP"/>
    <property type="match status" value="1"/>
</dbReference>
<dbReference type="PROSITE" id="PS00118">
    <property type="entry name" value="PA2_HIS"/>
    <property type="match status" value="1"/>
</dbReference>
<evidence type="ECO:0000250" key="1"/>
<evidence type="ECO:0000255" key="2">
    <source>
        <dbReference type="PROSITE-ProRule" id="PRU10035"/>
    </source>
</evidence>
<evidence type="ECO:0000255" key="3">
    <source>
        <dbReference type="PROSITE-ProRule" id="PRU10036"/>
    </source>
</evidence>
<evidence type="ECO:0000269" key="4">
    <source>
    </source>
</evidence>
<evidence type="ECO:0000305" key="5"/>
<evidence type="ECO:0000305" key="6">
    <source>
    </source>
</evidence>
<name>PA2A2_DABSI</name>
<organism>
    <name type="scientific">Daboia siamensis</name>
    <name type="common">Eastern Russel's viper</name>
    <name type="synonym">Daboia russelii siamensis</name>
    <dbReference type="NCBI Taxonomy" id="343250"/>
    <lineage>
        <taxon>Eukaryota</taxon>
        <taxon>Metazoa</taxon>
        <taxon>Chordata</taxon>
        <taxon>Craniata</taxon>
        <taxon>Vertebrata</taxon>
        <taxon>Euteleostomi</taxon>
        <taxon>Lepidosauria</taxon>
        <taxon>Squamata</taxon>
        <taxon>Bifurcata</taxon>
        <taxon>Unidentata</taxon>
        <taxon>Episquamata</taxon>
        <taxon>Toxicofera</taxon>
        <taxon>Serpentes</taxon>
        <taxon>Colubroidea</taxon>
        <taxon>Viperidae</taxon>
        <taxon>Viperinae</taxon>
        <taxon>Daboia</taxon>
    </lineage>
</organism>
<protein>
    <recommendedName>
        <fullName>Acidic phospholipase A2 DsM-a2/DsM-a2'</fullName>
        <shortName>svPLA2</shortName>
        <ecNumber>3.1.1.4</ecNumber>
    </recommendedName>
    <alternativeName>
        <fullName>Phosphatidylcholine 2-acylhydrolase</fullName>
    </alternativeName>
</protein>
<reference key="1">
    <citation type="journal article" date="2007" name="Biochim. Biophys. Acta">
        <title>Venom phospholipases of Russell's vipers from Myanmar and eastern India--cloning, characterization and phylogeographic analysis.</title>
        <authorList>
            <person name="Tsai I.-H."/>
            <person name="Tsai H.-Y."/>
            <person name="Wang Y.-M."/>
            <person name="Pe T."/>
            <person name="Warrell D.-A."/>
        </authorList>
    </citation>
    <scope>NUCLEOTIDE SEQUENCE [MRNA]</scope>
    <scope>PROTEIN SEQUENCE OF 17-29</scope>
    <scope>FUNCTION</scope>
    <scope>MASS SPECTROMETRY</scope>
    <source>
        <strain>Myanmar</strain>
        <tissue>Venom</tissue>
        <tissue>Venom gland</tissue>
    </source>
</reference>
<accession>A8CG78</accession>
<keyword id="KW-0903">Direct protein sequencing</keyword>
<keyword id="KW-1015">Disulfide bond</keyword>
<keyword id="KW-0378">Hydrolase</keyword>
<keyword id="KW-0442">Lipid degradation</keyword>
<keyword id="KW-0443">Lipid metabolism</keyword>
<keyword id="KW-0479">Metal-binding</keyword>
<keyword id="KW-0964">Secreted</keyword>
<keyword id="KW-0732">Signal</keyword>
<keyword id="KW-0800">Toxin</keyword>
<comment type="function">
    <text evidence="4">Exhibits high hydrolytic activities and shows strong preference for the anionic micelles (dPPC with deoxycholate) to the zwitterionic micelles (dPPC with Triton X-100). PLA2 catalyzes the calcium-dependent hydrolysis of the 2-acyl groups in 3-sn-phosphoglycerides.</text>
</comment>
<comment type="catalytic activity">
    <reaction evidence="2 3">
        <text>a 1,2-diacyl-sn-glycero-3-phosphocholine + H2O = a 1-acyl-sn-glycero-3-phosphocholine + a fatty acid + H(+)</text>
        <dbReference type="Rhea" id="RHEA:15801"/>
        <dbReference type="ChEBI" id="CHEBI:15377"/>
        <dbReference type="ChEBI" id="CHEBI:15378"/>
        <dbReference type="ChEBI" id="CHEBI:28868"/>
        <dbReference type="ChEBI" id="CHEBI:57643"/>
        <dbReference type="ChEBI" id="CHEBI:58168"/>
        <dbReference type="EC" id="3.1.1.4"/>
    </reaction>
</comment>
<comment type="cofactor">
    <cofactor evidence="1">
        <name>Ca(2+)</name>
        <dbReference type="ChEBI" id="CHEBI:29108"/>
    </cofactor>
    <text evidence="1">Binds 1 Ca(2+) ion.</text>
</comment>
<comment type="subcellular location">
    <subcellularLocation>
        <location>Secreted</location>
    </subcellularLocation>
</comment>
<comment type="tissue specificity">
    <text>Expressed by the venom gland.</text>
</comment>
<comment type="mass spectrometry" mass="13810.0" method="Electrospray" evidence="4">
    <text>in Dsm-a2'.</text>
</comment>
<comment type="similarity">
    <text evidence="5">Belongs to the phospholipase A2 family. Group II subfamily. D49 sub-subfamily.</text>
</comment>
<comment type="caution">
    <text evidence="6">Sequence obtained after translation (DsM-a2) and sequence directly sequenced from protein (Dsm-a2', AA 17-29) correspond exactly. However, the mass found for the protein (13810) does not correspond to the expected mass calculated after translation (13810) (PubMed:17611171).</text>
</comment>